<organism>
    <name type="scientific">Pseudomonas aeruginosa (strain ATCC 15692 / DSM 22644 / CIP 104116 / JCM 14847 / LMG 12228 / 1C / PRS 101 / PAO1)</name>
    <dbReference type="NCBI Taxonomy" id="208964"/>
    <lineage>
        <taxon>Bacteria</taxon>
        <taxon>Pseudomonadati</taxon>
        <taxon>Pseudomonadota</taxon>
        <taxon>Gammaproteobacteria</taxon>
        <taxon>Pseudomonadales</taxon>
        <taxon>Pseudomonadaceae</taxon>
        <taxon>Pseudomonas</taxon>
    </lineage>
</organism>
<feature type="chain" id="PRO_0000170475" description="Cyclic di-GMP phosphodiesterase NbdA">
    <location>
        <begin position="1"/>
        <end position="783"/>
    </location>
</feature>
<feature type="transmembrane region" description="Helical" evidence="2">
    <location>
        <begin position="84"/>
        <end position="104"/>
    </location>
</feature>
<feature type="transmembrane region" description="Helical" evidence="2">
    <location>
        <begin position="120"/>
        <end position="140"/>
    </location>
</feature>
<feature type="transmembrane region" description="Helical" evidence="2">
    <location>
        <begin position="150"/>
        <end position="170"/>
    </location>
</feature>
<feature type="transmembrane region" description="Helical" evidence="2">
    <location>
        <begin position="176"/>
        <end position="196"/>
    </location>
</feature>
<feature type="transmembrane region" description="Helical" evidence="2">
    <location>
        <begin position="215"/>
        <end position="235"/>
    </location>
</feature>
<feature type="transmembrane region" description="Helical" evidence="2">
    <location>
        <begin position="255"/>
        <end position="275"/>
    </location>
</feature>
<feature type="transmembrane region" description="Helical" evidence="2">
    <location>
        <begin position="292"/>
        <end position="312"/>
    </location>
</feature>
<feature type="topological domain" description="Cytoplasmic" evidence="10">
    <location>
        <begin position="313"/>
        <end position="783"/>
    </location>
</feature>
<feature type="domain" description="MHYT" evidence="5">
    <location>
        <begin position="81"/>
        <end position="274"/>
    </location>
</feature>
<feature type="domain" description="GGDEF" evidence="4">
    <location>
        <begin position="375"/>
        <end position="507"/>
    </location>
</feature>
<feature type="domain" description="EAL" evidence="3">
    <location>
        <begin position="516"/>
        <end position="770"/>
    </location>
</feature>
<feature type="binding site" evidence="1">
    <location>
        <position position="537"/>
    </location>
    <ligand>
        <name>3',3'-c-di-GMP</name>
        <dbReference type="ChEBI" id="CHEBI:58805"/>
    </ligand>
</feature>
<feature type="binding site" evidence="1">
    <location>
        <position position="551"/>
    </location>
    <ligand>
        <name>3',3'-c-di-GMP</name>
        <dbReference type="ChEBI" id="CHEBI:58805"/>
    </ligand>
</feature>
<feature type="binding site" evidence="1">
    <location>
        <position position="551"/>
    </location>
    <ligand>
        <name>Mg(2+)</name>
        <dbReference type="ChEBI" id="CHEBI:18420"/>
        <label>1</label>
    </ligand>
</feature>
<feature type="binding site" evidence="1">
    <location>
        <position position="555"/>
    </location>
    <ligand>
        <name>3',3'-c-di-GMP</name>
        <dbReference type="ChEBI" id="CHEBI:58805"/>
    </ligand>
</feature>
<feature type="binding site" evidence="1">
    <location>
        <position position="610"/>
    </location>
    <ligand>
        <name>3',3'-c-di-GMP</name>
        <dbReference type="ChEBI" id="CHEBI:58805"/>
    </ligand>
</feature>
<feature type="binding site" evidence="1">
    <location>
        <position position="610"/>
    </location>
    <ligand>
        <name>Mg(2+)</name>
        <dbReference type="ChEBI" id="CHEBI:18420"/>
        <label>1</label>
    </ligand>
</feature>
<feature type="binding site" evidence="1">
    <location>
        <position position="615"/>
    </location>
    <ligand>
        <name>3',3'-c-di-GMP</name>
        <dbReference type="ChEBI" id="CHEBI:58805"/>
    </ligand>
</feature>
<feature type="binding site" evidence="1">
    <location>
        <position position="642"/>
    </location>
    <ligand>
        <name>Mg(2+)</name>
        <dbReference type="ChEBI" id="CHEBI:18420"/>
        <label>1</label>
    </ligand>
</feature>
<feature type="binding site" evidence="1">
    <location>
        <position position="672"/>
    </location>
    <ligand>
        <name>3',3'-c-di-GMP</name>
        <dbReference type="ChEBI" id="CHEBI:58805"/>
    </ligand>
</feature>
<feature type="binding site" evidence="1">
    <location>
        <position position="672"/>
    </location>
    <ligand>
        <name>Mg(2+)</name>
        <dbReference type="ChEBI" id="CHEBI:18420"/>
        <label>1</label>
    </ligand>
</feature>
<feature type="binding site" evidence="1">
    <location>
        <position position="672"/>
    </location>
    <ligand>
        <name>Mg(2+)</name>
        <dbReference type="ChEBI" id="CHEBI:18420"/>
        <label>2</label>
    </ligand>
</feature>
<feature type="binding site" evidence="1">
    <location>
        <position position="673"/>
    </location>
    <ligand>
        <name>Mg(2+)</name>
        <dbReference type="ChEBI" id="CHEBI:18420"/>
        <label>2</label>
    </ligand>
</feature>
<feature type="binding site" evidence="1">
    <location>
        <position position="696"/>
    </location>
    <ligand>
        <name>3',3'-c-di-GMP</name>
        <dbReference type="ChEBI" id="CHEBI:58805"/>
    </ligand>
</feature>
<feature type="binding site" evidence="1">
    <location>
        <position position="729"/>
    </location>
    <ligand>
        <name>Mg(2+)</name>
        <dbReference type="ChEBI" id="CHEBI:18420"/>
        <label>2</label>
    </ligand>
</feature>
<feature type="binding site" evidence="1">
    <location>
        <position position="732"/>
    </location>
    <ligand>
        <name>3',3'-c-di-GMP</name>
        <dbReference type="ChEBI" id="CHEBI:58805"/>
    </ligand>
</feature>
<feature type="binding site" evidence="1">
    <location>
        <position position="751"/>
    </location>
    <ligand>
        <name>3',3'-c-di-GMP</name>
        <dbReference type="ChEBI" id="CHEBI:58805"/>
    </ligand>
</feature>
<feature type="mutagenesis site" description="Shows diguanylate cyclase activity." evidence="7">
    <original>A</original>
    <variation>G</variation>
    <location>
        <position position="424"/>
    </location>
</feature>
<name>NBDA_PSEAE</name>
<comment type="function">
    <text evidence="7">Displays c-di-GMP-specific phosphodiesterase (PDE) activity (PubMed:23729646). Seems to play a specific role in nitric oxide (NO)-induced biofilm dispersion (PubMed:23729646). Enhanced NbdA synthesis in the presence of NO increases PDE activity, leading to reduced cellular c-di-GMP levels and biofilm dispersion (PubMed:23729646). Does not show diguanylate cyclase (DGC) activity (PubMed:23729646).</text>
</comment>
<comment type="catalytic activity">
    <reaction evidence="7">
        <text>3',3'-c-di-GMP + H2O = 5'-phosphoguanylyl(3'-&gt;5')guanosine + H(+)</text>
        <dbReference type="Rhea" id="RHEA:24902"/>
        <dbReference type="ChEBI" id="CHEBI:15377"/>
        <dbReference type="ChEBI" id="CHEBI:15378"/>
        <dbReference type="ChEBI" id="CHEBI:58754"/>
        <dbReference type="ChEBI" id="CHEBI:58805"/>
        <dbReference type="EC" id="3.1.4.52"/>
    </reaction>
    <physiologicalReaction direction="left-to-right" evidence="7">
        <dbReference type="Rhea" id="RHEA:24903"/>
    </physiologicalReaction>
</comment>
<comment type="cofactor">
    <cofactor evidence="1">
        <name>Mg(2+)</name>
        <dbReference type="ChEBI" id="CHEBI:18420"/>
    </cofactor>
    <text evidence="1">Binds 2 Mg(2+) ions per subunit.</text>
</comment>
<comment type="activity regulation">
    <text evidence="7 10">PDE activity is stimulated by GTP (PubMed:23729646). It could also be stimulated by NO (Probable).</text>
</comment>
<comment type="subcellular location">
    <subcellularLocation>
        <location evidence="10">Cell inner membrane</location>
        <topology evidence="2">Multi-pass membrane protein</topology>
    </subcellularLocation>
</comment>
<comment type="induction">
    <text evidence="7">Expression is induced in response to nitric oxide (NO) (PubMed:23729646). Is probably only weakly expressed under normal conditions (PubMed:23729646).</text>
</comment>
<comment type="domain">
    <text evidence="10">The N-terminal MHYT domain might sense NO through a bound metal ion.</text>
</comment>
<comment type="disruption phenotype">
    <text evidence="6 7">Inactivation of the gene impairs biofilm dispersion upon exposure to NO but not dispersion in response to glutamate (PubMed:23729646). Disruption of the gene does not cause a biofilm-related phenotype under standard conditions (PubMed:16477007). Mutants exhibit an intermediate virulence phenotype (PubMed:16477007).</text>
</comment>
<evidence type="ECO:0000250" key="1">
    <source>
        <dbReference type="UniProtKB" id="Q9I310"/>
    </source>
</evidence>
<evidence type="ECO:0000255" key="2"/>
<evidence type="ECO:0000255" key="3">
    <source>
        <dbReference type="PROSITE-ProRule" id="PRU00074"/>
    </source>
</evidence>
<evidence type="ECO:0000255" key="4">
    <source>
        <dbReference type="PROSITE-ProRule" id="PRU00095"/>
    </source>
</evidence>
<evidence type="ECO:0000255" key="5">
    <source>
        <dbReference type="PROSITE-ProRule" id="PRU00244"/>
    </source>
</evidence>
<evidence type="ECO:0000269" key="6">
    <source>
    </source>
</evidence>
<evidence type="ECO:0000269" key="7">
    <source>
    </source>
</evidence>
<evidence type="ECO:0000303" key="8">
    <source>
    </source>
</evidence>
<evidence type="ECO:0000305" key="9"/>
<evidence type="ECO:0000305" key="10">
    <source>
    </source>
</evidence>
<evidence type="ECO:0000312" key="11">
    <source>
        <dbReference type="EMBL" id="AAG06699.1"/>
    </source>
</evidence>
<sequence length="783" mass="86817">MPFLPGKMPKPAVCRRPATSFHADLAGGSRYLYWKHNATPSPHPRRPRVFRVQGDTAMDWQGLRFLGESPVDGYVLQNCTYSPSLVALAFLVACLAGYTALDMVERVGNSLSHPRLWQWIGAFCLGSGIWATHFVAMLAFHAPIALRYDLPITGLSLLIAVAASYLTMYMTARPRFGLLPCLLAACCIGLGIAAMHYTGMAAMRSVATQYYQPSLFALSVLIAIGAAFTALAAVPYLRGRRSARYRYMKLIASLLLAGAIAAMHFTGMAALVLSVPAGTPLELQASADSLRLGWLTGVLASAIAACGIWAAWSEKQRERRLSENSRVNALLNQLDHAHASLRQMARYDSLTGLQNRTAFNEVFVQHLENCRLRGKGLAVMFLDLDHFKRINDSLGHDSGDQLLKIVSERIRSVLRDSDVVARFAGDEFCVLADLTQDHEAHILSQRLMQKMKEPIALDGRTLVMTASVGVSLYPNDGEQCEELLKNAGLALHQSKACGRNNAQFFSRQLLVRATQELQMEEELRQALRDDQLELHYQPILALADGEVHQLEALVRWRHPTQGLLGPDRFIGLAEANGMIDQLDDWVLRRACRDLRSLHLAGHERLRVAVNCCASNLGRASLVDEVRHALEQAGLAACFLELEVTEDALMYNIDQTIPLLERLRELGVSLSIDDFGTGYSSLAYLRRLPLDALKVDRSFIMDIPASQRDMEIAQAIIAMAQKLHLKVVAEGVETPQQLAFLRENHCELVQGYLFSRPLPLAALEEFLRAYRFDAAPPLRSLNQA</sequence>
<dbReference type="EC" id="3.1.4.52" evidence="7"/>
<dbReference type="EMBL" id="AE004091">
    <property type="protein sequence ID" value="AAG06699.1"/>
    <property type="molecule type" value="Genomic_DNA"/>
</dbReference>
<dbReference type="PIR" id="B83232">
    <property type="entry name" value="B83232"/>
</dbReference>
<dbReference type="RefSeq" id="NP_252001.1">
    <property type="nucleotide sequence ID" value="NC_002516.2"/>
</dbReference>
<dbReference type="RefSeq" id="WP_010895656.1">
    <property type="nucleotide sequence ID" value="NC_002516.2"/>
</dbReference>
<dbReference type="SMR" id="Q9HYT3"/>
<dbReference type="STRING" id="208964.PA3311"/>
<dbReference type="PaxDb" id="208964-PA3311"/>
<dbReference type="GeneID" id="882476"/>
<dbReference type="KEGG" id="pae:PA3311"/>
<dbReference type="PATRIC" id="fig|208964.12.peg.3468"/>
<dbReference type="PseudoCAP" id="PA3311"/>
<dbReference type="HOGENOM" id="CLU_000445_70_49_6"/>
<dbReference type="InParanoid" id="Q9HYT3"/>
<dbReference type="OrthoDB" id="9804951at2"/>
<dbReference type="PhylomeDB" id="Q9HYT3"/>
<dbReference type="BioCyc" id="PAER208964:G1FZ6-3375-MONOMER"/>
<dbReference type="Proteomes" id="UP000002438">
    <property type="component" value="Chromosome"/>
</dbReference>
<dbReference type="GO" id="GO:0005886">
    <property type="term" value="C:plasma membrane"/>
    <property type="evidence" value="ECO:0000318"/>
    <property type="project" value="GO_Central"/>
</dbReference>
<dbReference type="GO" id="GO:0071111">
    <property type="term" value="F:cyclic-guanylate-specific phosphodiesterase activity"/>
    <property type="evidence" value="ECO:0000314"/>
    <property type="project" value="PseudoCAP"/>
</dbReference>
<dbReference type="GO" id="GO:0046872">
    <property type="term" value="F:metal ion binding"/>
    <property type="evidence" value="ECO:0007669"/>
    <property type="project" value="UniProtKB-KW"/>
</dbReference>
<dbReference type="GO" id="GO:0071732">
    <property type="term" value="P:cellular response to nitric oxide"/>
    <property type="evidence" value="ECO:0000315"/>
    <property type="project" value="PseudoCAP"/>
</dbReference>
<dbReference type="GO" id="GO:1900190">
    <property type="term" value="P:regulation of single-species biofilm formation"/>
    <property type="evidence" value="ECO:0000318"/>
    <property type="project" value="GO_Central"/>
</dbReference>
<dbReference type="CDD" id="cd01948">
    <property type="entry name" value="EAL"/>
    <property type="match status" value="1"/>
</dbReference>
<dbReference type="CDD" id="cd01949">
    <property type="entry name" value="GGDEF"/>
    <property type="match status" value="1"/>
</dbReference>
<dbReference type="FunFam" id="3.20.20.450:FF:000001">
    <property type="entry name" value="Cyclic di-GMP phosphodiesterase yahA"/>
    <property type="match status" value="1"/>
</dbReference>
<dbReference type="FunFam" id="3.30.70.270:FF:000001">
    <property type="entry name" value="Diguanylate cyclase domain protein"/>
    <property type="match status" value="1"/>
</dbReference>
<dbReference type="Gene3D" id="3.30.70.270">
    <property type="match status" value="1"/>
</dbReference>
<dbReference type="Gene3D" id="3.20.20.450">
    <property type="entry name" value="EAL domain"/>
    <property type="match status" value="1"/>
</dbReference>
<dbReference type="InterPro" id="IPR050706">
    <property type="entry name" value="Cyclic-di-GMP_PDE-like"/>
</dbReference>
<dbReference type="InterPro" id="IPR001633">
    <property type="entry name" value="EAL_dom"/>
</dbReference>
<dbReference type="InterPro" id="IPR035919">
    <property type="entry name" value="EAL_sf"/>
</dbReference>
<dbReference type="InterPro" id="IPR000160">
    <property type="entry name" value="GGDEF_dom"/>
</dbReference>
<dbReference type="InterPro" id="IPR005330">
    <property type="entry name" value="MHYT_dom"/>
</dbReference>
<dbReference type="InterPro" id="IPR029787">
    <property type="entry name" value="Nucleotide_cyclase"/>
</dbReference>
<dbReference type="InterPro" id="IPR043128">
    <property type="entry name" value="Rev_trsase/Diguanyl_cyclase"/>
</dbReference>
<dbReference type="NCBIfam" id="TIGR00254">
    <property type="entry name" value="GGDEF"/>
    <property type="match status" value="1"/>
</dbReference>
<dbReference type="PANTHER" id="PTHR33121:SF79">
    <property type="entry name" value="CYCLIC DI-GMP PHOSPHODIESTERASE PDED-RELATED"/>
    <property type="match status" value="1"/>
</dbReference>
<dbReference type="PANTHER" id="PTHR33121">
    <property type="entry name" value="CYCLIC DI-GMP PHOSPHODIESTERASE PDEF"/>
    <property type="match status" value="1"/>
</dbReference>
<dbReference type="Pfam" id="PF00563">
    <property type="entry name" value="EAL"/>
    <property type="match status" value="1"/>
</dbReference>
<dbReference type="Pfam" id="PF00990">
    <property type="entry name" value="GGDEF"/>
    <property type="match status" value="1"/>
</dbReference>
<dbReference type="Pfam" id="PF03707">
    <property type="entry name" value="MHYT"/>
    <property type="match status" value="3"/>
</dbReference>
<dbReference type="SMART" id="SM00052">
    <property type="entry name" value="EAL"/>
    <property type="match status" value="1"/>
</dbReference>
<dbReference type="SMART" id="SM00267">
    <property type="entry name" value="GGDEF"/>
    <property type="match status" value="1"/>
</dbReference>
<dbReference type="SUPFAM" id="SSF141868">
    <property type="entry name" value="EAL domain-like"/>
    <property type="match status" value="1"/>
</dbReference>
<dbReference type="SUPFAM" id="SSF55073">
    <property type="entry name" value="Nucleotide cyclase"/>
    <property type="match status" value="1"/>
</dbReference>
<dbReference type="PROSITE" id="PS50883">
    <property type="entry name" value="EAL"/>
    <property type="match status" value="1"/>
</dbReference>
<dbReference type="PROSITE" id="PS50887">
    <property type="entry name" value="GGDEF"/>
    <property type="match status" value="1"/>
</dbReference>
<dbReference type="PROSITE" id="PS50924">
    <property type="entry name" value="MHYT"/>
    <property type="match status" value="1"/>
</dbReference>
<accession>Q9HYT3</accession>
<proteinExistence type="evidence at protein level"/>
<keyword id="KW-0973">c-di-GMP</keyword>
<keyword id="KW-0997">Cell inner membrane</keyword>
<keyword id="KW-1003">Cell membrane</keyword>
<keyword id="KW-0378">Hydrolase</keyword>
<keyword id="KW-0460">Magnesium</keyword>
<keyword id="KW-0472">Membrane</keyword>
<keyword id="KW-0479">Metal-binding</keyword>
<keyword id="KW-1185">Reference proteome</keyword>
<keyword id="KW-0812">Transmembrane</keyword>
<keyword id="KW-1133">Transmembrane helix</keyword>
<protein>
    <recommendedName>
        <fullName evidence="9">Cyclic di-GMP phosphodiesterase NbdA</fullName>
        <ecNumber evidence="7">3.1.4.52</ecNumber>
    </recommendedName>
    <alternativeName>
        <fullName evidence="8">NO-induced biofilm dispersion locus A</fullName>
    </alternativeName>
</protein>
<reference key="1">
    <citation type="journal article" date="2000" name="Nature">
        <title>Complete genome sequence of Pseudomonas aeruginosa PAO1, an opportunistic pathogen.</title>
        <authorList>
            <person name="Stover C.K."/>
            <person name="Pham X.-Q.T."/>
            <person name="Erwin A.L."/>
            <person name="Mizoguchi S.D."/>
            <person name="Warrener P."/>
            <person name="Hickey M.J."/>
            <person name="Brinkman F.S.L."/>
            <person name="Hufnagle W.O."/>
            <person name="Kowalik D.J."/>
            <person name="Lagrou M."/>
            <person name="Garber R.L."/>
            <person name="Goltry L."/>
            <person name="Tolentino E."/>
            <person name="Westbrock-Wadman S."/>
            <person name="Yuan Y."/>
            <person name="Brody L.L."/>
            <person name="Coulter S.N."/>
            <person name="Folger K.R."/>
            <person name="Kas A."/>
            <person name="Larbig K."/>
            <person name="Lim R.M."/>
            <person name="Smith K.A."/>
            <person name="Spencer D.H."/>
            <person name="Wong G.K.-S."/>
            <person name="Wu Z."/>
            <person name="Paulsen I.T."/>
            <person name="Reizer J."/>
            <person name="Saier M.H. Jr."/>
            <person name="Hancock R.E.W."/>
            <person name="Lory S."/>
            <person name="Olson M.V."/>
        </authorList>
    </citation>
    <scope>NUCLEOTIDE SEQUENCE [LARGE SCALE GENOMIC DNA]</scope>
    <source>
        <strain>ATCC 15692 / DSM 22644 / CIP 104116 / JCM 14847 / LMG 12228 / 1C / PRS 101 / PAO1</strain>
    </source>
</reference>
<reference key="2">
    <citation type="journal article" date="2006" name="Proc. Natl. Acad. Sci. U.S.A.">
        <title>Analysis of Pseudomonas aeruginosa diguanylate cyclases and phosphodiesterases reveals a role for bis-(3'-5')-cyclic-GMP in virulence.</title>
        <authorList>
            <person name="Kulasakara H."/>
            <person name="Lee V."/>
            <person name="Brencic A."/>
            <person name="Liberati N."/>
            <person name="Urbach J."/>
            <person name="Miyata S."/>
            <person name="Lee D.G."/>
            <person name="Neely A.N."/>
            <person name="Hyodo M."/>
            <person name="Hayakawa Y."/>
            <person name="Ausubel F.M."/>
            <person name="Lory S."/>
        </authorList>
    </citation>
    <scope>DISRUPTION PHENOTYPE</scope>
    <source>
        <strain>PA14</strain>
    </source>
</reference>
<reference key="3">
    <citation type="journal article" date="2006" name="Proc. Natl. Acad. Sci. U.S.A.">
        <authorList>
            <person name="Kulasakara H."/>
            <person name="Lee V."/>
            <person name="Brencic A."/>
            <person name="Liberati N."/>
            <person name="Urbach J."/>
            <person name="Miyata S."/>
            <person name="Lee D.G."/>
            <person name="Neely A.N."/>
            <person name="Hyodo M."/>
            <person name="Hayakawa Y."/>
            <person name="Ausubel F.M."/>
            <person name="Lory S."/>
        </authorList>
    </citation>
    <scope>ERRATUM OF PUBMED:16477007</scope>
</reference>
<reference key="4">
    <citation type="journal article" date="2013" name="J. Bacteriol.">
        <title>NO-induced biofilm dispersion in Pseudomonas aeruginosa is mediated by an MHYT domain-coupled phosphodiesterase.</title>
        <authorList>
            <person name="Li Y."/>
            <person name="Heine S."/>
            <person name="Entian M."/>
            <person name="Sauer K."/>
            <person name="Frankenberg-Dinkel N."/>
        </authorList>
    </citation>
    <scope>FUNCTION</scope>
    <scope>CATALYTIC ACTIVITY</scope>
    <scope>ACTIVITY REGULATION</scope>
    <scope>INDUCTION</scope>
    <scope>DOMAIN</scope>
    <scope>DISRUPTION PHENOTYPE</scope>
    <scope>MUTAGENESIS OF ALA-424</scope>
    <source>
        <strain>ATCC 15692 / DSM 22644 / CIP 104116 / JCM 14847 / LMG 12228 / 1C / PRS 101 / PAO1</strain>
    </source>
</reference>
<gene>
    <name evidence="8" type="primary">nbdA</name>
    <name evidence="11" type="ordered locus">PA3311</name>
</gene>